<accession>P87148</accession>
<proteinExistence type="inferred from homology"/>
<keyword id="KW-0968">Cytoplasmic vesicle</keyword>
<keyword id="KW-0256">Endoplasmic reticulum</keyword>
<keyword id="KW-0931">ER-Golgi transport</keyword>
<keyword id="KW-0333">Golgi apparatus</keyword>
<keyword id="KW-0472">Membrane</keyword>
<keyword id="KW-0653">Protein transport</keyword>
<keyword id="KW-1185">Reference proteome</keyword>
<keyword id="KW-0812">Transmembrane</keyword>
<keyword id="KW-1133">Transmembrane helix</keyword>
<keyword id="KW-0813">Transport</keyword>
<protein>
    <recommendedName>
        <fullName>Protein transport protein yif1</fullName>
    </recommendedName>
    <alternativeName>
        <fullName>Heavy metal resistance factor 1</fullName>
    </alternativeName>
    <alternativeName>
        <fullName>YIP1-interacting factor 1</fullName>
    </alternativeName>
</protein>
<gene>
    <name evidence="3" type="primary">hrf1</name>
    <name evidence="1" type="synonym">yif1</name>
    <name type="ORF">SPBC25H2.06c</name>
</gene>
<comment type="function">
    <text evidence="1">Required for fusion of ER-derived vesicles with the Golgi during ER-to-Golgi protein transport. May be involved in proper membrane localization of Rab GTPases (By similarity).</text>
</comment>
<comment type="subunit">
    <text evidence="1">Component of the yip1-yif1 complex, composed of at least yif1, yip1 and yos1. The complex interacts with the ER to Golgi SNAREs bos1 and sec22 (By similarity).</text>
</comment>
<comment type="subcellular location">
    <subcellularLocation>
        <location evidence="1">Endoplasmic reticulum membrane</location>
        <topology evidence="2">Multi-pass membrane protein</topology>
    </subcellularLocation>
    <subcellularLocation>
        <location evidence="1">Golgi apparatus membrane</location>
        <topology evidence="2">Multi-pass membrane protein</topology>
    </subcellularLocation>
    <subcellularLocation>
        <location evidence="1">Cytoplasmic vesicle</location>
        <location evidence="1">COPII-coated vesicle</location>
    </subcellularLocation>
</comment>
<comment type="similarity">
    <text evidence="2">Belongs to the YIF1 family.</text>
</comment>
<sequence length="293" mass="33045">MPPKLYHPQPTHAIPVSNMRVNTRYEPTAGFSGTSVPSVQAANPSAYLPNSATAQMGFQLGKNAVNAGQEYVEQNFGKWLSTTRLHHYFTVTNSYVVAKLLLIIFPWRRRSWARKLRRSEINGSAEGYCPPAEDLNSPDMYIPLMAFTTHILLLCALAGLQDDFQPELFGLRASKACAVVLVEFLATRLGCYLLNISSQSQVLDLLAFSGYKFVGLILTSLSKLFEMPWVTRFVFLYMYLATAFFLLRSLKYAVLPESTMAINATITSHQRSRRIYFLFFIAASQILFMYVLS</sequence>
<reference key="1">
    <citation type="journal article" date="2002" name="Nature">
        <title>The genome sequence of Schizosaccharomyces pombe.</title>
        <authorList>
            <person name="Wood V."/>
            <person name="Gwilliam R."/>
            <person name="Rajandream M.A."/>
            <person name="Lyne M.H."/>
            <person name="Lyne R."/>
            <person name="Stewart A."/>
            <person name="Sgouros J.G."/>
            <person name="Peat N."/>
            <person name="Hayles J."/>
            <person name="Baker S.G."/>
            <person name="Basham D."/>
            <person name="Bowman S."/>
            <person name="Brooks K."/>
            <person name="Brown D."/>
            <person name="Brown S."/>
            <person name="Chillingworth T."/>
            <person name="Churcher C.M."/>
            <person name="Collins M."/>
            <person name="Connor R."/>
            <person name="Cronin A."/>
            <person name="Davis P."/>
            <person name="Feltwell T."/>
            <person name="Fraser A."/>
            <person name="Gentles S."/>
            <person name="Goble A."/>
            <person name="Hamlin N."/>
            <person name="Harris D.E."/>
            <person name="Hidalgo J."/>
            <person name="Hodgson G."/>
            <person name="Holroyd S."/>
            <person name="Hornsby T."/>
            <person name="Howarth S."/>
            <person name="Huckle E.J."/>
            <person name="Hunt S."/>
            <person name="Jagels K."/>
            <person name="James K.D."/>
            <person name="Jones L."/>
            <person name="Jones M."/>
            <person name="Leather S."/>
            <person name="McDonald S."/>
            <person name="McLean J."/>
            <person name="Mooney P."/>
            <person name="Moule S."/>
            <person name="Mungall K.L."/>
            <person name="Murphy L.D."/>
            <person name="Niblett D."/>
            <person name="Odell C."/>
            <person name="Oliver K."/>
            <person name="O'Neil S."/>
            <person name="Pearson D."/>
            <person name="Quail M.A."/>
            <person name="Rabbinowitsch E."/>
            <person name="Rutherford K.M."/>
            <person name="Rutter S."/>
            <person name="Saunders D."/>
            <person name="Seeger K."/>
            <person name="Sharp S."/>
            <person name="Skelton J."/>
            <person name="Simmonds M.N."/>
            <person name="Squares R."/>
            <person name="Squares S."/>
            <person name="Stevens K."/>
            <person name="Taylor K."/>
            <person name="Taylor R.G."/>
            <person name="Tivey A."/>
            <person name="Walsh S.V."/>
            <person name="Warren T."/>
            <person name="Whitehead S."/>
            <person name="Woodward J.R."/>
            <person name="Volckaert G."/>
            <person name="Aert R."/>
            <person name="Robben J."/>
            <person name="Grymonprez B."/>
            <person name="Weltjens I."/>
            <person name="Vanstreels E."/>
            <person name="Rieger M."/>
            <person name="Schaefer M."/>
            <person name="Mueller-Auer S."/>
            <person name="Gabel C."/>
            <person name="Fuchs M."/>
            <person name="Duesterhoeft A."/>
            <person name="Fritzc C."/>
            <person name="Holzer E."/>
            <person name="Moestl D."/>
            <person name="Hilbert H."/>
            <person name="Borzym K."/>
            <person name="Langer I."/>
            <person name="Beck A."/>
            <person name="Lehrach H."/>
            <person name="Reinhardt R."/>
            <person name="Pohl T.M."/>
            <person name="Eger P."/>
            <person name="Zimmermann W."/>
            <person name="Wedler H."/>
            <person name="Wambutt R."/>
            <person name="Purnelle B."/>
            <person name="Goffeau A."/>
            <person name="Cadieu E."/>
            <person name="Dreano S."/>
            <person name="Gloux S."/>
            <person name="Lelaure V."/>
            <person name="Mottier S."/>
            <person name="Galibert F."/>
            <person name="Aves S.J."/>
            <person name="Xiang Z."/>
            <person name="Hunt C."/>
            <person name="Moore K."/>
            <person name="Hurst S.M."/>
            <person name="Lucas M."/>
            <person name="Rochet M."/>
            <person name="Gaillardin C."/>
            <person name="Tallada V.A."/>
            <person name="Garzon A."/>
            <person name="Thode G."/>
            <person name="Daga R.R."/>
            <person name="Cruzado L."/>
            <person name="Jimenez J."/>
            <person name="Sanchez M."/>
            <person name="del Rey F."/>
            <person name="Benito J."/>
            <person name="Dominguez A."/>
            <person name="Revuelta J.L."/>
            <person name="Moreno S."/>
            <person name="Armstrong J."/>
            <person name="Forsburg S.L."/>
            <person name="Cerutti L."/>
            <person name="Lowe T."/>
            <person name="McCombie W.R."/>
            <person name="Paulsen I."/>
            <person name="Potashkin J."/>
            <person name="Shpakovski G.V."/>
            <person name="Ussery D."/>
            <person name="Barrell B.G."/>
            <person name="Nurse P."/>
        </authorList>
    </citation>
    <scope>NUCLEOTIDE SEQUENCE [LARGE SCALE GENOMIC DNA]</scope>
    <source>
        <strain>972 / ATCC 24843</strain>
    </source>
</reference>
<evidence type="ECO:0000250" key="1">
    <source>
        <dbReference type="UniProtKB" id="P53845"/>
    </source>
</evidence>
<evidence type="ECO:0000255" key="2"/>
<evidence type="ECO:0000312" key="3">
    <source>
        <dbReference type="PomBase" id="SPBC25H2.06c"/>
    </source>
</evidence>
<name>YIF1_SCHPO</name>
<feature type="chain" id="PRO_0000253961" description="Protein transport protein yif1">
    <location>
        <begin position="1"/>
        <end position="293"/>
    </location>
</feature>
<feature type="topological domain" description="Cytoplasmic" evidence="2">
    <location>
        <begin position="1"/>
        <end position="139"/>
    </location>
</feature>
<feature type="transmembrane region" description="Helical" evidence="2">
    <location>
        <begin position="140"/>
        <end position="160"/>
    </location>
</feature>
<feature type="topological domain" description="Lumenal" evidence="2">
    <location>
        <begin position="161"/>
        <end position="175"/>
    </location>
</feature>
<feature type="transmembrane region" description="Helical" evidence="2">
    <location>
        <begin position="176"/>
        <end position="196"/>
    </location>
</feature>
<feature type="topological domain" description="Cytoplasmic" evidence="2">
    <location>
        <begin position="197"/>
        <end position="201"/>
    </location>
</feature>
<feature type="transmembrane region" description="Helical" evidence="2">
    <location>
        <begin position="202"/>
        <end position="222"/>
    </location>
</feature>
<feature type="topological domain" description="Lumenal" evidence="2">
    <location>
        <begin position="223"/>
        <end position="226"/>
    </location>
</feature>
<feature type="transmembrane region" description="Helical" evidence="2">
    <location>
        <begin position="227"/>
        <end position="247"/>
    </location>
</feature>
<feature type="topological domain" description="Cytoplasmic" evidence="2">
    <location>
        <begin position="248"/>
        <end position="271"/>
    </location>
</feature>
<feature type="transmembrane region" description="Helical" evidence="2">
    <location>
        <begin position="272"/>
        <end position="292"/>
    </location>
</feature>
<feature type="topological domain" description="Lumenal" evidence="2">
    <location>
        <position position="293"/>
    </location>
</feature>
<organism>
    <name type="scientific">Schizosaccharomyces pombe (strain 972 / ATCC 24843)</name>
    <name type="common">Fission yeast</name>
    <dbReference type="NCBI Taxonomy" id="284812"/>
    <lineage>
        <taxon>Eukaryota</taxon>
        <taxon>Fungi</taxon>
        <taxon>Dikarya</taxon>
        <taxon>Ascomycota</taxon>
        <taxon>Taphrinomycotina</taxon>
        <taxon>Schizosaccharomycetes</taxon>
        <taxon>Schizosaccharomycetales</taxon>
        <taxon>Schizosaccharomycetaceae</taxon>
        <taxon>Schizosaccharomyces</taxon>
    </lineage>
</organism>
<dbReference type="EMBL" id="CU329671">
    <property type="protein sequence ID" value="CAB08782.1"/>
    <property type="molecule type" value="Genomic_DNA"/>
</dbReference>
<dbReference type="PIR" id="T40001">
    <property type="entry name" value="T40001"/>
</dbReference>
<dbReference type="RefSeq" id="NP_596360.1">
    <property type="nucleotide sequence ID" value="NM_001022281.2"/>
</dbReference>
<dbReference type="BioGRID" id="276885">
    <property type="interactions" value="3"/>
</dbReference>
<dbReference type="FunCoup" id="P87148">
    <property type="interactions" value="318"/>
</dbReference>
<dbReference type="STRING" id="284812.P87148"/>
<dbReference type="iPTMnet" id="P87148"/>
<dbReference type="PaxDb" id="4896-SPBC25H2.06c.1"/>
<dbReference type="EnsemblFungi" id="SPBC25H2.06c.1">
    <property type="protein sequence ID" value="SPBC25H2.06c.1:pep"/>
    <property type="gene ID" value="SPBC25H2.06c"/>
</dbReference>
<dbReference type="GeneID" id="2540356"/>
<dbReference type="KEGG" id="spo:2540356"/>
<dbReference type="PomBase" id="SPBC25H2.06c">
    <property type="gene designation" value="hrf1"/>
</dbReference>
<dbReference type="VEuPathDB" id="FungiDB:SPBC25H2.06c"/>
<dbReference type="eggNOG" id="KOG3094">
    <property type="taxonomic scope" value="Eukaryota"/>
</dbReference>
<dbReference type="HOGENOM" id="CLU_047877_2_0_1"/>
<dbReference type="InParanoid" id="P87148"/>
<dbReference type="OMA" id="NWEVRYS"/>
<dbReference type="PhylomeDB" id="P87148"/>
<dbReference type="PRO" id="PR:P87148"/>
<dbReference type="Proteomes" id="UP000002485">
    <property type="component" value="Chromosome II"/>
</dbReference>
<dbReference type="GO" id="GO:0030134">
    <property type="term" value="C:COPII-coated ER to Golgi transport vesicle"/>
    <property type="evidence" value="ECO:0000318"/>
    <property type="project" value="GO_Central"/>
</dbReference>
<dbReference type="GO" id="GO:0005789">
    <property type="term" value="C:endoplasmic reticulum membrane"/>
    <property type="evidence" value="ECO:0000318"/>
    <property type="project" value="GO_Central"/>
</dbReference>
<dbReference type="GO" id="GO:0005793">
    <property type="term" value="C:endoplasmic reticulum-Golgi intermediate compartment"/>
    <property type="evidence" value="ECO:0000318"/>
    <property type="project" value="GO_Central"/>
</dbReference>
<dbReference type="GO" id="GO:0000139">
    <property type="term" value="C:Golgi membrane"/>
    <property type="evidence" value="ECO:0000318"/>
    <property type="project" value="GO_Central"/>
</dbReference>
<dbReference type="GO" id="GO:0006888">
    <property type="term" value="P:endoplasmic reticulum to Golgi vesicle-mediated transport"/>
    <property type="evidence" value="ECO:0000318"/>
    <property type="project" value="GO_Central"/>
</dbReference>
<dbReference type="GO" id="GO:0006886">
    <property type="term" value="P:intracellular protein transport"/>
    <property type="evidence" value="ECO:0000303"/>
    <property type="project" value="PomBase"/>
</dbReference>
<dbReference type="InterPro" id="IPR005578">
    <property type="entry name" value="Yif1_fam"/>
</dbReference>
<dbReference type="PANTHER" id="PTHR14083">
    <property type="entry name" value="YIP1 INTERACTING FACTOR HOMOLOG YIF1 PROTEIN"/>
    <property type="match status" value="1"/>
</dbReference>
<dbReference type="PANTHER" id="PTHR14083:SF0">
    <property type="entry name" value="YIP1D-INTERACTING FACTOR 1, ISOFORM C"/>
    <property type="match status" value="1"/>
</dbReference>
<dbReference type="Pfam" id="PF03878">
    <property type="entry name" value="YIF1"/>
    <property type="match status" value="1"/>
</dbReference>